<accession>F4IUG9</accession>
<accession>Q9SK73</accession>
<feature type="chain" id="PRO_0000422868" description="Myosin-13">
    <location>
        <begin position="1"/>
        <end position="1493"/>
    </location>
</feature>
<feature type="domain" description="Myosin N-terminal SH3-like" evidence="6">
    <location>
        <begin position="18"/>
        <end position="67"/>
    </location>
</feature>
<feature type="domain" description="Myosin motor" evidence="5">
    <location>
        <begin position="72"/>
        <end position="741"/>
    </location>
</feature>
<feature type="domain" description="IQ 1" evidence="3">
    <location>
        <begin position="744"/>
        <end position="773"/>
    </location>
</feature>
<feature type="domain" description="IQ 2" evidence="3">
    <location>
        <begin position="767"/>
        <end position="796"/>
    </location>
</feature>
<feature type="domain" description="IQ 3" evidence="3">
    <location>
        <begin position="792"/>
        <end position="821"/>
    </location>
</feature>
<feature type="domain" description="IQ 4" evidence="3">
    <location>
        <begin position="813"/>
        <end position="842"/>
    </location>
</feature>
<feature type="domain" description="IQ 5" evidence="3">
    <location>
        <begin position="836"/>
        <end position="865"/>
    </location>
</feature>
<feature type="domain" description="IQ 6" evidence="3">
    <location>
        <begin position="859"/>
        <end position="888"/>
    </location>
</feature>
<feature type="domain" description="Dilute" evidence="4">
    <location>
        <begin position="1161"/>
        <end position="1444"/>
    </location>
</feature>
<feature type="region of interest" description="Actin-binding" evidence="2">
    <location>
        <begin position="504"/>
        <end position="538"/>
    </location>
</feature>
<feature type="region of interest" description="Actin-binding" evidence="2">
    <location>
        <begin position="540"/>
        <end position="563"/>
    </location>
</feature>
<feature type="region of interest" description="Actin-binding" evidence="2">
    <location>
        <begin position="598"/>
        <end position="622"/>
    </location>
</feature>
<feature type="region of interest" description="Actin-binding" evidence="1">
    <location>
        <begin position="622"/>
        <end position="644"/>
    </location>
</feature>
<feature type="region of interest" description="Disordered" evidence="7">
    <location>
        <begin position="1085"/>
        <end position="1114"/>
    </location>
</feature>
<feature type="coiled-coil region" evidence="2">
    <location>
        <begin position="889"/>
        <end position="1057"/>
    </location>
</feature>
<feature type="compositionally biased region" description="Basic and acidic residues" evidence="7">
    <location>
        <begin position="1102"/>
        <end position="1114"/>
    </location>
</feature>
<feature type="binding site" evidence="2">
    <location>
        <begin position="166"/>
        <end position="173"/>
    </location>
    <ligand>
        <name>ATP</name>
        <dbReference type="ChEBI" id="CHEBI:30616"/>
    </ligand>
</feature>
<feature type="binding site" evidence="2">
    <location>
        <begin position="219"/>
        <end position="227"/>
    </location>
    <ligand>
        <name>ATP</name>
        <dbReference type="ChEBI" id="CHEBI:30616"/>
    </ligand>
</feature>
<dbReference type="EMBL" id="AC006569">
    <property type="protein sequence ID" value="AAD21759.1"/>
    <property type="status" value="ALT_SEQ"/>
    <property type="molecule type" value="Genomic_DNA"/>
</dbReference>
<dbReference type="EMBL" id="CP002685">
    <property type="protein sequence ID" value="AEC06990.1"/>
    <property type="molecule type" value="Genomic_DNA"/>
</dbReference>
<dbReference type="PIR" id="D84587">
    <property type="entry name" value="D84587"/>
</dbReference>
<dbReference type="RefSeq" id="NP_179619.2">
    <property type="nucleotide sequence ID" value="NM_127588.3"/>
</dbReference>
<dbReference type="SMR" id="F4IUG9"/>
<dbReference type="FunCoup" id="F4IUG9">
    <property type="interactions" value="1085"/>
</dbReference>
<dbReference type="IntAct" id="F4IUG9">
    <property type="interactions" value="1"/>
</dbReference>
<dbReference type="STRING" id="3702.F4IUG9"/>
<dbReference type="iPTMnet" id="F4IUG9"/>
<dbReference type="PaxDb" id="3702-AT2G20290.1"/>
<dbReference type="ProteomicsDB" id="251336"/>
<dbReference type="EnsemblPlants" id="AT2G20290.1">
    <property type="protein sequence ID" value="AT2G20290.1"/>
    <property type="gene ID" value="AT2G20290"/>
</dbReference>
<dbReference type="GeneID" id="816548"/>
<dbReference type="Gramene" id="AT2G20290.1">
    <property type="protein sequence ID" value="AT2G20290.1"/>
    <property type="gene ID" value="AT2G20290"/>
</dbReference>
<dbReference type="KEGG" id="ath:AT2G20290"/>
<dbReference type="Araport" id="AT2G20290"/>
<dbReference type="TAIR" id="AT2G20290">
    <property type="gene designation" value="XIG"/>
</dbReference>
<dbReference type="eggNOG" id="KOG0160">
    <property type="taxonomic scope" value="Eukaryota"/>
</dbReference>
<dbReference type="HOGENOM" id="CLU_000192_3_1_1"/>
<dbReference type="InParanoid" id="F4IUG9"/>
<dbReference type="PRO" id="PR:F4IUG9"/>
<dbReference type="Proteomes" id="UP000006548">
    <property type="component" value="Chromosome 2"/>
</dbReference>
<dbReference type="ExpressionAtlas" id="F4IUG9">
    <property type="expression patterns" value="baseline and differential"/>
</dbReference>
<dbReference type="GO" id="GO:0016459">
    <property type="term" value="C:myosin complex"/>
    <property type="evidence" value="ECO:0007669"/>
    <property type="project" value="UniProtKB-KW"/>
</dbReference>
<dbReference type="GO" id="GO:0003779">
    <property type="term" value="F:actin binding"/>
    <property type="evidence" value="ECO:0007669"/>
    <property type="project" value="UniProtKB-KW"/>
</dbReference>
<dbReference type="GO" id="GO:0005524">
    <property type="term" value="F:ATP binding"/>
    <property type="evidence" value="ECO:0007669"/>
    <property type="project" value="UniProtKB-KW"/>
</dbReference>
<dbReference type="GO" id="GO:0005516">
    <property type="term" value="F:calmodulin binding"/>
    <property type="evidence" value="ECO:0007669"/>
    <property type="project" value="UniProtKB-KW"/>
</dbReference>
<dbReference type="GO" id="GO:0003774">
    <property type="term" value="F:cytoskeletal motor activity"/>
    <property type="evidence" value="ECO:0000250"/>
    <property type="project" value="TAIR"/>
</dbReference>
<dbReference type="GO" id="GO:0007015">
    <property type="term" value="P:actin filament organization"/>
    <property type="evidence" value="ECO:0007669"/>
    <property type="project" value="InterPro"/>
</dbReference>
<dbReference type="GO" id="GO:0030048">
    <property type="term" value="P:actin filament-based movement"/>
    <property type="evidence" value="ECO:0000304"/>
    <property type="project" value="TAIR"/>
</dbReference>
<dbReference type="CDD" id="cd23767">
    <property type="entry name" value="IQCD"/>
    <property type="match status" value="1"/>
</dbReference>
<dbReference type="CDD" id="cd15475">
    <property type="entry name" value="MyosinXI_CBD"/>
    <property type="match status" value="1"/>
</dbReference>
<dbReference type="CDD" id="cd01384">
    <property type="entry name" value="MYSc_Myo11"/>
    <property type="match status" value="1"/>
</dbReference>
<dbReference type="FunFam" id="1.20.120.720:FF:000011">
    <property type="entry name" value="Myosin 2"/>
    <property type="match status" value="1"/>
</dbReference>
<dbReference type="FunFam" id="1.10.10.820:FF:000001">
    <property type="entry name" value="Myosin heavy chain"/>
    <property type="match status" value="1"/>
</dbReference>
<dbReference type="FunFam" id="1.20.5.190:FF:000018">
    <property type="entry name" value="Myosin XI D"/>
    <property type="match status" value="1"/>
</dbReference>
<dbReference type="FunFam" id="1.20.5.190:FF:000001">
    <property type="entry name" value="unconventional myosin-Va"/>
    <property type="match status" value="1"/>
</dbReference>
<dbReference type="Gene3D" id="1.10.10.820">
    <property type="match status" value="1"/>
</dbReference>
<dbReference type="Gene3D" id="1.20.5.190">
    <property type="match status" value="2"/>
</dbReference>
<dbReference type="Gene3D" id="1.20.58.530">
    <property type="match status" value="1"/>
</dbReference>
<dbReference type="Gene3D" id="6.20.240.20">
    <property type="match status" value="1"/>
</dbReference>
<dbReference type="Gene3D" id="3.40.850.10">
    <property type="entry name" value="Kinesin motor domain"/>
    <property type="match status" value="1"/>
</dbReference>
<dbReference type="Gene3D" id="1.20.120.720">
    <property type="entry name" value="Myosin VI head, motor domain, U50 subdomain"/>
    <property type="match status" value="1"/>
</dbReference>
<dbReference type="InterPro" id="IPR002710">
    <property type="entry name" value="Dilute_dom"/>
</dbReference>
<dbReference type="InterPro" id="IPR000048">
    <property type="entry name" value="IQ_motif_EF-hand-BS"/>
</dbReference>
<dbReference type="InterPro" id="IPR036961">
    <property type="entry name" value="Kinesin_motor_dom_sf"/>
</dbReference>
<dbReference type="InterPro" id="IPR001609">
    <property type="entry name" value="Myosin_head_motor_dom-like"/>
</dbReference>
<dbReference type="InterPro" id="IPR004009">
    <property type="entry name" value="Myosin_N"/>
</dbReference>
<dbReference type="InterPro" id="IPR037975">
    <property type="entry name" value="MyosinXI_CBD"/>
</dbReference>
<dbReference type="InterPro" id="IPR036018">
    <property type="entry name" value="MYSc_Myo11"/>
</dbReference>
<dbReference type="InterPro" id="IPR027417">
    <property type="entry name" value="P-loop_NTPase"/>
</dbReference>
<dbReference type="PANTHER" id="PTHR13140">
    <property type="entry name" value="MYOSIN"/>
    <property type="match status" value="1"/>
</dbReference>
<dbReference type="PANTHER" id="PTHR13140:SF762">
    <property type="entry name" value="MYOSIN-13"/>
    <property type="match status" value="1"/>
</dbReference>
<dbReference type="Pfam" id="PF01843">
    <property type="entry name" value="DIL"/>
    <property type="match status" value="1"/>
</dbReference>
<dbReference type="Pfam" id="PF00612">
    <property type="entry name" value="IQ"/>
    <property type="match status" value="5"/>
</dbReference>
<dbReference type="Pfam" id="PF00063">
    <property type="entry name" value="Myosin_head"/>
    <property type="match status" value="1"/>
</dbReference>
<dbReference type="Pfam" id="PF02736">
    <property type="entry name" value="Myosin_N"/>
    <property type="match status" value="1"/>
</dbReference>
<dbReference type="PRINTS" id="PR00193">
    <property type="entry name" value="MYOSINHEAVY"/>
</dbReference>
<dbReference type="SMART" id="SM01132">
    <property type="entry name" value="DIL"/>
    <property type="match status" value="1"/>
</dbReference>
<dbReference type="SMART" id="SM00015">
    <property type="entry name" value="IQ"/>
    <property type="match status" value="5"/>
</dbReference>
<dbReference type="SMART" id="SM00242">
    <property type="entry name" value="MYSc"/>
    <property type="match status" value="1"/>
</dbReference>
<dbReference type="SUPFAM" id="SSF52540">
    <property type="entry name" value="P-loop containing nucleoside triphosphate hydrolases"/>
    <property type="match status" value="2"/>
</dbReference>
<dbReference type="PROSITE" id="PS51126">
    <property type="entry name" value="DILUTE"/>
    <property type="match status" value="1"/>
</dbReference>
<dbReference type="PROSITE" id="PS50096">
    <property type="entry name" value="IQ"/>
    <property type="match status" value="4"/>
</dbReference>
<dbReference type="PROSITE" id="PS51456">
    <property type="entry name" value="MYOSIN_MOTOR"/>
    <property type="match status" value="1"/>
</dbReference>
<dbReference type="PROSITE" id="PS51844">
    <property type="entry name" value="SH3_LIKE"/>
    <property type="match status" value="1"/>
</dbReference>
<comment type="function">
    <text evidence="1">Myosin heavy chain that is required for the cell cycle-regulated transport of various organelles and proteins for their segregation. Functions by binding with its tail domain to receptor proteins on organelles and exerting force with its N-terminal motor domain against actin filaments, thereby transporting its cargo along polarized actin cables (By similarity).</text>
</comment>
<comment type="subunit">
    <text evidence="1">Homodimer.</text>
</comment>
<comment type="domain">
    <text evidence="1">IQ domain mediates interaction with calmodulin.</text>
</comment>
<comment type="domain">
    <text evidence="1">The tail domain is a globular cargo-binding domain.</text>
</comment>
<comment type="similarity">
    <text evidence="8">Belongs to the TRAFAC class myosin-kinesin ATPase superfamily. Myosin family. Plant myosin class XI subfamily.</text>
</comment>
<comment type="sequence caution" evidence="8">
    <conflict type="erroneous gene model prediction">
        <sequence resource="EMBL-CDS" id="AAD21759"/>
    </conflict>
</comment>
<reference key="1">
    <citation type="journal article" date="1999" name="Nature">
        <title>Sequence and analysis of chromosome 2 of the plant Arabidopsis thaliana.</title>
        <authorList>
            <person name="Lin X."/>
            <person name="Kaul S."/>
            <person name="Rounsley S.D."/>
            <person name="Shea T.P."/>
            <person name="Benito M.-I."/>
            <person name="Town C.D."/>
            <person name="Fujii C.Y."/>
            <person name="Mason T.M."/>
            <person name="Bowman C.L."/>
            <person name="Barnstead M.E."/>
            <person name="Feldblyum T.V."/>
            <person name="Buell C.R."/>
            <person name="Ketchum K.A."/>
            <person name="Lee J.J."/>
            <person name="Ronning C.M."/>
            <person name="Koo H.L."/>
            <person name="Moffat K.S."/>
            <person name="Cronin L.A."/>
            <person name="Shen M."/>
            <person name="Pai G."/>
            <person name="Van Aken S."/>
            <person name="Umayam L."/>
            <person name="Tallon L.J."/>
            <person name="Gill J.E."/>
            <person name="Adams M.D."/>
            <person name="Carrera A.J."/>
            <person name="Creasy T.H."/>
            <person name="Goodman H.M."/>
            <person name="Somerville C.R."/>
            <person name="Copenhaver G.P."/>
            <person name="Preuss D."/>
            <person name="Nierman W.C."/>
            <person name="White O."/>
            <person name="Eisen J.A."/>
            <person name="Salzberg S.L."/>
            <person name="Fraser C.M."/>
            <person name="Venter J.C."/>
        </authorList>
    </citation>
    <scope>NUCLEOTIDE SEQUENCE [LARGE SCALE GENOMIC DNA]</scope>
    <source>
        <strain>cv. Columbia</strain>
    </source>
</reference>
<reference key="2">
    <citation type="journal article" date="2017" name="Plant J.">
        <title>Araport11: a complete reannotation of the Arabidopsis thaliana reference genome.</title>
        <authorList>
            <person name="Cheng C.Y."/>
            <person name="Krishnakumar V."/>
            <person name="Chan A.P."/>
            <person name="Thibaud-Nissen F."/>
            <person name="Schobel S."/>
            <person name="Town C.D."/>
        </authorList>
    </citation>
    <scope>GENOME REANNOTATION</scope>
    <source>
        <strain>cv. Columbia</strain>
    </source>
</reference>
<reference key="3">
    <citation type="journal article" date="2000" name="J. Cell Sci.">
        <title>A myosin family tree.</title>
        <authorList>
            <person name="Hodge T."/>
            <person name="Cope M.J."/>
        </authorList>
    </citation>
    <scope>GENE FAMILY</scope>
</reference>
<reference key="4">
    <citation type="journal article" date="2001" name="Genome Biol.">
        <title>Analysis of the myosins encoded in the recently completed Arabidopsis thaliana genome sequence.</title>
        <authorList>
            <person name="Reddy A.S."/>
            <person name="Day I.S."/>
        </authorList>
    </citation>
    <scope>GENE FAMILY</scope>
</reference>
<reference key="5">
    <citation type="journal article" date="2011" name="Plant Physiol.">
        <title>Expression, splicing, and evolution of the myosin gene family in plants.</title>
        <authorList>
            <person name="Peremyslov V.V."/>
            <person name="Mockler T.C."/>
            <person name="Filichkin S.A."/>
            <person name="Fox S.E."/>
            <person name="Jaiswal P."/>
            <person name="Makarova K.S."/>
            <person name="Koonin E.V."/>
            <person name="Dolja V.V."/>
        </authorList>
    </citation>
    <scope>GENE FAMILY</scope>
    <scope>NOMENCLATURE</scope>
</reference>
<proteinExistence type="inferred from homology"/>
<protein>
    <recommendedName>
        <fullName>Myosin-13</fullName>
    </recommendedName>
    <alternativeName>
        <fullName>Myosin XI G</fullName>
        <shortName>AtXIG</shortName>
    </alternativeName>
</protein>
<sequence length="1493" mass="169073">MVFKVFSFVAFMACSTVKVGSIVWVQDPEEAWIDGEVVEVNGEDIKVQCTSGKTVVAKGSNTYPKDMEVPPSGVDDMTTLAYLHEPGVLQNLKSRYYIDEIYTYTGNILIAVNPFKQLPNLYNDHMMAQYKGAALGELSPHPFAVADAAYRQMINEGISQSILVSGESGAGKTETAKMLMKYLAKMGGRAVSDRRTVEDQVLESNPVLEAFGNAKTVKNNNSSRFGKFVEIQFDQRGRISGAAIRTYLLERSRVCQVSDPERNYHCFYMLCAAPPEDKRKLKLNDPTEFRYLNQSHCIKLDGVDDSKEYTKTREAMGIVGINLEEQEAIFRVVAAILHLGNIEFAIGEEPDSSVPTDESKKYLKIAAELFMCDEQALEDSLCKRIMVTPEETISRCLDPNSAALSRDALAKFVYSRLFDWIVNKINNSIGQDPDSKDMIGVLDIYGFESFKTNSFEQFCINLTNEKLQQHFTQHVLKMEQEEYTKEEIEWSQITFPDNRYVLELIEKKRGGIIALLDEACMFPRSTHKTFSQKLYETLKDNKYFSKPKLSRTDFTICHYAGDVTYQTEQFLEKNKDYVVAEHQALLGASRCTFIAGLFPPLVEDANKQSKFSSIASQFKQQLASLIEGLNTTEPHYIRCVKPNNLLKPSIFENQNSLQQLRCGGVMETIRVCRAGYPTRKHFDEFLDRFGILDSATLDKSSDEKAACKKLLETVGLNGFQIGKTKVFLKAGQMAELDDRRTEVLGRAACIIQWKFRSYLTRQSFIMLRNAAINIQAVYRGQVARYRFENLRREAAALKIQRALRIHLDRKRSYIEAVVTVQSGLRGMAARVVLRRKTKATTVIQSHCRRLRAELHYKKLKKAAITTQSAWRARLARKELRKLKTDARDTVVLQAAKSMLAEKVEELTWRLDLEKRMRVDMEVSKAQENAKLQLALEEIQLQFEETKVSLLKEVEAAKKTAAIVPVVKEVPVVDTVLMEKLTSENEKLKSLVTSLELKIDETEKKFEETKKISEERLKKALDAENKIDNLKTAMHNLEEKLKEVKLENNFLKESVLTTPVKTASGRFLSTPLKNLQNGLFTSEESQLSGAEFTTPPRIQESGSDTKSRGSHIDPQHEDVDALINSVTKNVGFSQGKPVAAFTIYKCLLHWKSFEAERTNVFDRLVQMIGSAIKDEDNDANLAYWLSNTSTLLFMLQQSLKSGGTGATPLRQSPSLVRWMTKGFRSPAAEAIRPVDAKDPALHFKQQLEAYVEKILGIIWDNLKKELNTVLALCIQAPKTFKGNALISITTANYWQDIIEGLDALLSTLKESFVPPVLIQKIFSQAFSLINVQVCNSLVTRPDNCSFINGEYLKSGLEKLEKWCCETKEEYAGSSWDELKHTRQAVGFLLIHKKYNISYDEIANDLCPNLQIQQHFKLCTLYKDEIYNTKSVSQDVIASMTGVMTDSSDFLLKEDSSNIISLSIDDLCSSMQDKDFAQVKPAEELLENPSFIFLH</sequence>
<organism>
    <name type="scientific">Arabidopsis thaliana</name>
    <name type="common">Mouse-ear cress</name>
    <dbReference type="NCBI Taxonomy" id="3702"/>
    <lineage>
        <taxon>Eukaryota</taxon>
        <taxon>Viridiplantae</taxon>
        <taxon>Streptophyta</taxon>
        <taxon>Embryophyta</taxon>
        <taxon>Tracheophyta</taxon>
        <taxon>Spermatophyta</taxon>
        <taxon>Magnoliopsida</taxon>
        <taxon>eudicotyledons</taxon>
        <taxon>Gunneridae</taxon>
        <taxon>Pentapetalae</taxon>
        <taxon>rosids</taxon>
        <taxon>malvids</taxon>
        <taxon>Brassicales</taxon>
        <taxon>Brassicaceae</taxon>
        <taxon>Camelineae</taxon>
        <taxon>Arabidopsis</taxon>
    </lineage>
</organism>
<name>MYO13_ARATH</name>
<evidence type="ECO:0000250" key="1"/>
<evidence type="ECO:0000255" key="2"/>
<evidence type="ECO:0000255" key="3">
    <source>
        <dbReference type="PROSITE-ProRule" id="PRU00116"/>
    </source>
</evidence>
<evidence type="ECO:0000255" key="4">
    <source>
        <dbReference type="PROSITE-ProRule" id="PRU00503"/>
    </source>
</evidence>
<evidence type="ECO:0000255" key="5">
    <source>
        <dbReference type="PROSITE-ProRule" id="PRU00782"/>
    </source>
</evidence>
<evidence type="ECO:0000255" key="6">
    <source>
        <dbReference type="PROSITE-ProRule" id="PRU01190"/>
    </source>
</evidence>
<evidence type="ECO:0000256" key="7">
    <source>
        <dbReference type="SAM" id="MobiDB-lite"/>
    </source>
</evidence>
<evidence type="ECO:0000305" key="8"/>
<gene>
    <name type="primary">XI-G</name>
    <name type="synonym">XIG</name>
    <name type="ordered locus">At2g20290</name>
    <name type="ORF">F11A3.16</name>
</gene>
<keyword id="KW-0009">Actin-binding</keyword>
<keyword id="KW-0067">ATP-binding</keyword>
<keyword id="KW-0112">Calmodulin-binding</keyword>
<keyword id="KW-0175">Coiled coil</keyword>
<keyword id="KW-0505">Motor protein</keyword>
<keyword id="KW-0518">Myosin</keyword>
<keyword id="KW-0547">Nucleotide-binding</keyword>
<keyword id="KW-1185">Reference proteome</keyword>
<keyword id="KW-0677">Repeat</keyword>